<sequence>MNPALPRHIAVLKGGPSEEREISLRTAKAVEDALSSLGYEISSIDVTTEKFEIPRDAEICFLCIHGSFGEDGQIQRLLMRRGIPFTGSDASSSEKAFDKAWSKTLFIKGGIPTPPFCVVGDGKKIPFDPPYVIKPSRQGSSIGIEFVYDIKELDQAIKKSTQYDHVVLAEALITGKELTVGILDGKALPVVEIKPKEGFYDYHHKYTKGASTYFCPAPLTVDQTSAVQKTALDAFNVLGCSVYGRVDIILSDNGIPWVLEINTIPGMTETSLFPMAAKASGMNFAQLCEKILEISYLRWKAHG</sequence>
<dbReference type="EC" id="6.3.2.4" evidence="2"/>
<dbReference type="EMBL" id="CP000975">
    <property type="protein sequence ID" value="ACD83462.1"/>
    <property type="molecule type" value="Genomic_DNA"/>
</dbReference>
<dbReference type="RefSeq" id="WP_012463744.1">
    <property type="nucleotide sequence ID" value="NC_010794.1"/>
</dbReference>
<dbReference type="SMR" id="B3DVV9"/>
<dbReference type="STRING" id="481448.Minf_1408"/>
<dbReference type="KEGG" id="min:Minf_1408"/>
<dbReference type="eggNOG" id="COG1181">
    <property type="taxonomic scope" value="Bacteria"/>
</dbReference>
<dbReference type="HOGENOM" id="CLU_039268_1_1_0"/>
<dbReference type="OrthoDB" id="9813261at2"/>
<dbReference type="UniPathway" id="UPA00219"/>
<dbReference type="Proteomes" id="UP000009149">
    <property type="component" value="Chromosome"/>
</dbReference>
<dbReference type="GO" id="GO:0005737">
    <property type="term" value="C:cytoplasm"/>
    <property type="evidence" value="ECO:0007669"/>
    <property type="project" value="UniProtKB-SubCell"/>
</dbReference>
<dbReference type="GO" id="GO:0005524">
    <property type="term" value="F:ATP binding"/>
    <property type="evidence" value="ECO:0007669"/>
    <property type="project" value="UniProtKB-KW"/>
</dbReference>
<dbReference type="GO" id="GO:0008716">
    <property type="term" value="F:D-alanine-D-alanine ligase activity"/>
    <property type="evidence" value="ECO:0007669"/>
    <property type="project" value="UniProtKB-UniRule"/>
</dbReference>
<dbReference type="GO" id="GO:0046872">
    <property type="term" value="F:metal ion binding"/>
    <property type="evidence" value="ECO:0007669"/>
    <property type="project" value="UniProtKB-KW"/>
</dbReference>
<dbReference type="GO" id="GO:0071555">
    <property type="term" value="P:cell wall organization"/>
    <property type="evidence" value="ECO:0007669"/>
    <property type="project" value="UniProtKB-KW"/>
</dbReference>
<dbReference type="GO" id="GO:0009252">
    <property type="term" value="P:peptidoglycan biosynthetic process"/>
    <property type="evidence" value="ECO:0007669"/>
    <property type="project" value="UniProtKB-UniRule"/>
</dbReference>
<dbReference type="GO" id="GO:0008360">
    <property type="term" value="P:regulation of cell shape"/>
    <property type="evidence" value="ECO:0007669"/>
    <property type="project" value="UniProtKB-KW"/>
</dbReference>
<dbReference type="FunFam" id="3.30.470.20:FF:000008">
    <property type="entry name" value="D-alanine--D-alanine ligase"/>
    <property type="match status" value="1"/>
</dbReference>
<dbReference type="Gene3D" id="3.40.50.20">
    <property type="match status" value="1"/>
</dbReference>
<dbReference type="Gene3D" id="3.30.1490.20">
    <property type="entry name" value="ATP-grasp fold, A domain"/>
    <property type="match status" value="1"/>
</dbReference>
<dbReference type="Gene3D" id="3.30.470.20">
    <property type="entry name" value="ATP-grasp fold, B domain"/>
    <property type="match status" value="1"/>
</dbReference>
<dbReference type="HAMAP" id="MF_00047">
    <property type="entry name" value="Dala_Dala_lig"/>
    <property type="match status" value="1"/>
</dbReference>
<dbReference type="InterPro" id="IPR011761">
    <property type="entry name" value="ATP-grasp"/>
</dbReference>
<dbReference type="InterPro" id="IPR013815">
    <property type="entry name" value="ATP_grasp_subdomain_1"/>
</dbReference>
<dbReference type="InterPro" id="IPR000291">
    <property type="entry name" value="D-Ala_lig_Van_CS"/>
</dbReference>
<dbReference type="InterPro" id="IPR005905">
    <property type="entry name" value="D_ala_D_ala"/>
</dbReference>
<dbReference type="InterPro" id="IPR011095">
    <property type="entry name" value="Dala_Dala_lig_C"/>
</dbReference>
<dbReference type="InterPro" id="IPR016185">
    <property type="entry name" value="PreATP-grasp_dom_sf"/>
</dbReference>
<dbReference type="NCBIfam" id="TIGR01205">
    <property type="entry name" value="D_ala_D_alaTIGR"/>
    <property type="match status" value="1"/>
</dbReference>
<dbReference type="NCBIfam" id="NF002378">
    <property type="entry name" value="PRK01372.1"/>
    <property type="match status" value="1"/>
</dbReference>
<dbReference type="PANTHER" id="PTHR23132">
    <property type="entry name" value="D-ALANINE--D-ALANINE LIGASE"/>
    <property type="match status" value="1"/>
</dbReference>
<dbReference type="PANTHER" id="PTHR23132:SF23">
    <property type="entry name" value="D-ALANINE--D-ALANINE LIGASE B"/>
    <property type="match status" value="1"/>
</dbReference>
<dbReference type="Pfam" id="PF07478">
    <property type="entry name" value="Dala_Dala_lig_C"/>
    <property type="match status" value="1"/>
</dbReference>
<dbReference type="PIRSF" id="PIRSF039102">
    <property type="entry name" value="Ddl/VanB"/>
    <property type="match status" value="1"/>
</dbReference>
<dbReference type="SUPFAM" id="SSF56059">
    <property type="entry name" value="Glutathione synthetase ATP-binding domain-like"/>
    <property type="match status" value="1"/>
</dbReference>
<dbReference type="SUPFAM" id="SSF52440">
    <property type="entry name" value="PreATP-grasp domain"/>
    <property type="match status" value="1"/>
</dbReference>
<dbReference type="PROSITE" id="PS50975">
    <property type="entry name" value="ATP_GRASP"/>
    <property type="match status" value="1"/>
</dbReference>
<dbReference type="PROSITE" id="PS00844">
    <property type="entry name" value="DALA_DALA_LIGASE_2"/>
    <property type="match status" value="1"/>
</dbReference>
<evidence type="ECO:0000250" key="1"/>
<evidence type="ECO:0000255" key="2">
    <source>
        <dbReference type="HAMAP-Rule" id="MF_00047"/>
    </source>
</evidence>
<comment type="function">
    <text evidence="2">Cell wall formation.</text>
</comment>
<comment type="catalytic activity">
    <reaction evidence="2">
        <text>2 D-alanine + ATP = D-alanyl-D-alanine + ADP + phosphate + H(+)</text>
        <dbReference type="Rhea" id="RHEA:11224"/>
        <dbReference type="ChEBI" id="CHEBI:15378"/>
        <dbReference type="ChEBI" id="CHEBI:30616"/>
        <dbReference type="ChEBI" id="CHEBI:43474"/>
        <dbReference type="ChEBI" id="CHEBI:57416"/>
        <dbReference type="ChEBI" id="CHEBI:57822"/>
        <dbReference type="ChEBI" id="CHEBI:456216"/>
        <dbReference type="EC" id="6.3.2.4"/>
    </reaction>
</comment>
<comment type="cofactor">
    <cofactor evidence="1">
        <name>Mg(2+)</name>
        <dbReference type="ChEBI" id="CHEBI:18420"/>
    </cofactor>
    <cofactor evidence="1">
        <name>Mn(2+)</name>
        <dbReference type="ChEBI" id="CHEBI:29035"/>
    </cofactor>
    <text evidence="1">Binds 2 magnesium or manganese ions per subunit.</text>
</comment>
<comment type="pathway">
    <text evidence="2">Cell wall biogenesis; peptidoglycan biosynthesis.</text>
</comment>
<comment type="subcellular location">
    <subcellularLocation>
        <location evidence="2">Cytoplasm</location>
    </subcellularLocation>
</comment>
<comment type="similarity">
    <text evidence="2">Belongs to the D-alanine--D-alanine ligase family.</text>
</comment>
<proteinExistence type="inferred from homology"/>
<feature type="chain" id="PRO_1000091194" description="D-alanine--D-alanine ligase">
    <location>
        <begin position="1"/>
        <end position="303"/>
    </location>
</feature>
<feature type="domain" description="ATP-grasp" evidence="2">
    <location>
        <begin position="103"/>
        <end position="293"/>
    </location>
</feature>
<feature type="binding site" evidence="2">
    <location>
        <begin position="130"/>
        <end position="179"/>
    </location>
    <ligand>
        <name>ATP</name>
        <dbReference type="ChEBI" id="CHEBI:30616"/>
    </ligand>
</feature>
<feature type="binding site" evidence="2">
    <location>
        <position position="247"/>
    </location>
    <ligand>
        <name>Mg(2+)</name>
        <dbReference type="ChEBI" id="CHEBI:18420"/>
        <label>1</label>
    </ligand>
</feature>
<feature type="binding site" evidence="2">
    <location>
        <position position="260"/>
    </location>
    <ligand>
        <name>Mg(2+)</name>
        <dbReference type="ChEBI" id="CHEBI:18420"/>
        <label>1</label>
    </ligand>
</feature>
<feature type="binding site" evidence="2">
    <location>
        <position position="260"/>
    </location>
    <ligand>
        <name>Mg(2+)</name>
        <dbReference type="ChEBI" id="CHEBI:18420"/>
        <label>2</label>
    </ligand>
</feature>
<feature type="binding site" evidence="2">
    <location>
        <position position="262"/>
    </location>
    <ligand>
        <name>Mg(2+)</name>
        <dbReference type="ChEBI" id="CHEBI:18420"/>
        <label>2</label>
    </ligand>
</feature>
<accession>B3DVV9</accession>
<keyword id="KW-0067">ATP-binding</keyword>
<keyword id="KW-0133">Cell shape</keyword>
<keyword id="KW-0961">Cell wall biogenesis/degradation</keyword>
<keyword id="KW-0963">Cytoplasm</keyword>
<keyword id="KW-0436">Ligase</keyword>
<keyword id="KW-0460">Magnesium</keyword>
<keyword id="KW-0464">Manganese</keyword>
<keyword id="KW-0479">Metal-binding</keyword>
<keyword id="KW-0547">Nucleotide-binding</keyword>
<keyword id="KW-0573">Peptidoglycan synthesis</keyword>
<name>DDL_METI4</name>
<gene>
    <name evidence="2" type="primary">ddl</name>
    <name type="ordered locus">Minf_1408</name>
</gene>
<protein>
    <recommendedName>
        <fullName evidence="2">D-alanine--D-alanine ligase</fullName>
        <ecNumber evidence="2">6.3.2.4</ecNumber>
    </recommendedName>
    <alternativeName>
        <fullName evidence="2">D-Ala-D-Ala ligase</fullName>
    </alternativeName>
    <alternativeName>
        <fullName evidence="2">D-alanylalanine synthetase</fullName>
    </alternativeName>
</protein>
<reference key="1">
    <citation type="journal article" date="2008" name="Biol. Direct">
        <title>Complete genome sequence of the extremely acidophilic methanotroph isolate V4, Methylacidiphilum infernorum, a representative of the bacterial phylum Verrucomicrobia.</title>
        <authorList>
            <person name="Hou S."/>
            <person name="Makarova K.S."/>
            <person name="Saw J.H."/>
            <person name="Senin P."/>
            <person name="Ly B.V."/>
            <person name="Zhou Z."/>
            <person name="Ren Y."/>
            <person name="Wang J."/>
            <person name="Galperin M.Y."/>
            <person name="Omelchenko M.V."/>
            <person name="Wolf Y.I."/>
            <person name="Yutin N."/>
            <person name="Koonin E.V."/>
            <person name="Stott M.B."/>
            <person name="Mountain B.W."/>
            <person name="Crowe M.A."/>
            <person name="Smirnova A.V."/>
            <person name="Dunfield P.F."/>
            <person name="Feng L."/>
            <person name="Wang L."/>
            <person name="Alam M."/>
        </authorList>
    </citation>
    <scope>NUCLEOTIDE SEQUENCE [LARGE SCALE GENOMIC DNA]</scope>
    <source>
        <strain>Isolate V4</strain>
    </source>
</reference>
<organism>
    <name type="scientific">Methylacidiphilum infernorum (isolate V4)</name>
    <name type="common">Methylokorus infernorum (strain V4)</name>
    <dbReference type="NCBI Taxonomy" id="481448"/>
    <lineage>
        <taxon>Bacteria</taxon>
        <taxon>Pseudomonadati</taxon>
        <taxon>Verrucomicrobiota</taxon>
        <taxon>Methylacidiphilae</taxon>
        <taxon>Methylacidiphilales</taxon>
        <taxon>Methylacidiphilaceae</taxon>
        <taxon>Methylacidiphilum (ex Ratnadevi et al. 2023)</taxon>
    </lineage>
</organism>